<sequence>MRALSANLFAVLLMCALASVFYVWSALENRLERHKRGSSVPDGGSFHQGPSEDHSAKTFRALLAVPVAQRQNSAGRSKAQNLTNPSAFVGSRDYHVNGDDERSAQREGPVKLGYPVDDGIFWSNWLEDVLPVRFTEGYAEAWRSKARTSPVVKLEPGCGRISNQLATFADGTKACVRYGINADQVQGETLTYYLASLLGITNLPPLVLSQLNGDSAQWVAVRTRINNLQWSDRAVVSLTEWISNLTGVVTPAPLRQESSGLLPALRCFENKTTAELLELMQWSDLIVFDYLTANFDRLVSNLFSLQWDPHVMERDTNNLLKTPHGDLVFIDNEAGLVHGFRVLNMWEKYHHSVLSSVCVFRKRTMQRVAELHRRRDSRQRLLELYRDSEPLSQELGFLSDEHAAVLQDRIDQLYKHIMQCKEKYNQL</sequence>
<organism>
    <name type="scientific">Xiphophorus maculatus</name>
    <name type="common">Southern platyfish</name>
    <name type="synonym">Platypoecilus maculatus</name>
    <dbReference type="NCBI Taxonomy" id="8083"/>
    <lineage>
        <taxon>Eukaryota</taxon>
        <taxon>Metazoa</taxon>
        <taxon>Chordata</taxon>
        <taxon>Craniata</taxon>
        <taxon>Vertebrata</taxon>
        <taxon>Euteleostomi</taxon>
        <taxon>Actinopterygii</taxon>
        <taxon>Neopterygii</taxon>
        <taxon>Teleostei</taxon>
        <taxon>Neoteleostei</taxon>
        <taxon>Acanthomorphata</taxon>
        <taxon>Ovalentaria</taxon>
        <taxon>Atherinomorphae</taxon>
        <taxon>Cyprinodontiformes</taxon>
        <taxon>Poeciliidae</taxon>
        <taxon>Poeciliinae</taxon>
        <taxon>Xiphophorus</taxon>
    </lineage>
</organism>
<evidence type="ECO:0000250" key="1"/>
<evidence type="ECO:0000255" key="2"/>
<accession>Q5ZEQ8</accession>
<name>FJX1_XIPMA</name>
<keyword id="KW-0325">Glycoprotein</keyword>
<keyword id="KW-1185">Reference proteome</keyword>
<keyword id="KW-0964">Secreted</keyword>
<keyword id="KW-0732">Signal</keyword>
<protein>
    <recommendedName>
        <fullName>Four-jointed box protein 1</fullName>
    </recommendedName>
    <alternativeName>
        <fullName>Four-jointed protein homolog</fullName>
    </alternativeName>
</protein>
<dbReference type="EMBL" id="AJ849641">
    <property type="protein sequence ID" value="CAH61084.1"/>
    <property type="molecule type" value="Genomic_DNA"/>
</dbReference>
<dbReference type="RefSeq" id="XP_005802291.1">
    <property type="nucleotide sequence ID" value="XM_005802234.1"/>
</dbReference>
<dbReference type="RefSeq" id="XP_023209171.1">
    <property type="nucleotide sequence ID" value="XM_023353403.1"/>
</dbReference>
<dbReference type="STRING" id="8083.ENSXMAP00000020297"/>
<dbReference type="GlyCosmos" id="Q5ZEQ8">
    <property type="glycosylation" value="3 sites, No reported glycans"/>
</dbReference>
<dbReference type="Ensembl" id="ENSXMAT00000020325.2">
    <property type="protein sequence ID" value="ENSXMAP00000020297.1"/>
    <property type="gene ID" value="ENSXMAG00000020250.2"/>
</dbReference>
<dbReference type="GeneID" id="102229935"/>
<dbReference type="eggNOG" id="ENOG502QUJ4">
    <property type="taxonomic scope" value="Eukaryota"/>
</dbReference>
<dbReference type="GeneTree" id="ENSGT00390000016768"/>
<dbReference type="HOGENOM" id="CLU_033850_0_0_1"/>
<dbReference type="InParanoid" id="Q5ZEQ8"/>
<dbReference type="OMA" id="WSEWLED"/>
<dbReference type="OrthoDB" id="10055077at2759"/>
<dbReference type="Proteomes" id="UP000002852">
    <property type="component" value="Unassembled WGS sequence"/>
</dbReference>
<dbReference type="GO" id="GO:0005615">
    <property type="term" value="C:extracellular space"/>
    <property type="evidence" value="ECO:0007669"/>
    <property type="project" value="TreeGrafter"/>
</dbReference>
<dbReference type="GO" id="GO:0007267">
    <property type="term" value="P:cell-cell signaling"/>
    <property type="evidence" value="ECO:0007669"/>
    <property type="project" value="TreeGrafter"/>
</dbReference>
<dbReference type="CDD" id="cd10468">
    <property type="entry name" value="Four-jointed-like_C"/>
    <property type="match status" value="1"/>
</dbReference>
<dbReference type="InterPro" id="IPR024868">
    <property type="entry name" value="FJX1/FJ"/>
</dbReference>
<dbReference type="PANTHER" id="PTHR13147">
    <property type="entry name" value="FOUR-JOINTED BOX PROTEIN 1"/>
    <property type="match status" value="1"/>
</dbReference>
<dbReference type="PANTHER" id="PTHR13147:SF5">
    <property type="entry name" value="FOUR-JOINTED BOX PROTEIN 1"/>
    <property type="match status" value="1"/>
</dbReference>
<dbReference type="PRINTS" id="PR02072">
    <property type="entry name" value="4JOINTEDBOX1"/>
</dbReference>
<reference key="1">
    <citation type="journal article" date="2005" name="Dev. Dyn.">
        <title>Fjx1: a notch-inducible secreted ligand with specific binding sites in developing mouse embryos and adult brain.</title>
        <authorList>
            <person name="Rock R."/>
            <person name="Heinrich A.C."/>
            <person name="Schumacher N."/>
            <person name="Gessler M."/>
        </authorList>
    </citation>
    <scope>NUCLEOTIDE SEQUENCE [MRNA]</scope>
</reference>
<comment type="function">
    <text evidence="1">May act as an inhibitor of dendrite extension and branching.</text>
</comment>
<comment type="subcellular location">
    <subcellularLocation>
        <location evidence="1">Secreted</location>
    </subcellularLocation>
</comment>
<proteinExistence type="evidence at transcript level"/>
<feature type="signal peptide" evidence="2">
    <location>
        <begin position="1"/>
        <end position="18"/>
    </location>
</feature>
<feature type="chain" id="PRO_0000333047" description="Four-jointed box protein 1">
    <location>
        <begin position="19"/>
        <end position="427"/>
    </location>
</feature>
<feature type="glycosylation site" description="N-linked (GlcNAc...) asparagine" evidence="2">
    <location>
        <position position="81"/>
    </location>
</feature>
<feature type="glycosylation site" description="N-linked (GlcNAc...) asparagine" evidence="2">
    <location>
        <position position="244"/>
    </location>
</feature>
<feature type="glycosylation site" description="N-linked (GlcNAc...) asparagine" evidence="2">
    <location>
        <position position="270"/>
    </location>
</feature>
<gene>
    <name type="primary">fjx1</name>
</gene>